<feature type="chain" id="PRO_0000059424" description="L-fuculokinase">
    <location>
        <begin position="1"/>
        <end position="472"/>
    </location>
</feature>
<organism>
    <name type="scientific">Escherichia coli O157:H7</name>
    <dbReference type="NCBI Taxonomy" id="83334"/>
    <lineage>
        <taxon>Bacteria</taxon>
        <taxon>Pseudomonadati</taxon>
        <taxon>Pseudomonadota</taxon>
        <taxon>Gammaproteobacteria</taxon>
        <taxon>Enterobacterales</taxon>
        <taxon>Enterobacteriaceae</taxon>
        <taxon>Escherichia</taxon>
    </lineage>
</organism>
<proteinExistence type="inferred from homology"/>
<dbReference type="EC" id="2.7.1.51" evidence="1"/>
<dbReference type="EMBL" id="AE005174">
    <property type="protein sequence ID" value="AAG57917.1"/>
    <property type="status" value="ALT_INIT"/>
    <property type="molecule type" value="Genomic_DNA"/>
</dbReference>
<dbReference type="EMBL" id="BA000007">
    <property type="protein sequence ID" value="BAB37086.2"/>
    <property type="molecule type" value="Genomic_DNA"/>
</dbReference>
<dbReference type="PIR" id="A85932">
    <property type="entry name" value="A85932"/>
</dbReference>
<dbReference type="PIR" id="G91086">
    <property type="entry name" value="G91086"/>
</dbReference>
<dbReference type="RefSeq" id="WP_000808389.1">
    <property type="nucleotide sequence ID" value="NZ_VOAI01000003.1"/>
</dbReference>
<dbReference type="SMR" id="Q8X6R3"/>
<dbReference type="STRING" id="155864.Z4120"/>
<dbReference type="KEGG" id="ece:Z4120"/>
<dbReference type="KEGG" id="ecs:ECs_3663"/>
<dbReference type="PATRIC" id="fig|386585.9.peg.3829"/>
<dbReference type="eggNOG" id="COG1070">
    <property type="taxonomic scope" value="Bacteria"/>
</dbReference>
<dbReference type="HOGENOM" id="CLU_009281_11_2_6"/>
<dbReference type="UniPathway" id="UPA00563">
    <property type="reaction ID" value="UER00625"/>
</dbReference>
<dbReference type="Proteomes" id="UP000000558">
    <property type="component" value="Chromosome"/>
</dbReference>
<dbReference type="Proteomes" id="UP000002519">
    <property type="component" value="Chromosome"/>
</dbReference>
<dbReference type="GO" id="GO:0005524">
    <property type="term" value="F:ATP binding"/>
    <property type="evidence" value="ECO:0007669"/>
    <property type="project" value="UniProtKB-UniRule"/>
</dbReference>
<dbReference type="GO" id="GO:0008737">
    <property type="term" value="F:L-fuculokinase activity"/>
    <property type="evidence" value="ECO:0007669"/>
    <property type="project" value="UniProtKB-UniRule"/>
</dbReference>
<dbReference type="GO" id="GO:0042355">
    <property type="term" value="P:L-fucose catabolic process"/>
    <property type="evidence" value="ECO:0007669"/>
    <property type="project" value="UniProtKB-UniRule"/>
</dbReference>
<dbReference type="CDD" id="cd07773">
    <property type="entry name" value="ASKHA_NBD_FGGY_FK"/>
    <property type="match status" value="1"/>
</dbReference>
<dbReference type="FunFam" id="3.30.420.40:FF:000159">
    <property type="entry name" value="L-fuculokinase"/>
    <property type="match status" value="1"/>
</dbReference>
<dbReference type="FunFam" id="3.30.420.40:FF:000161">
    <property type="entry name" value="L-fuculokinase"/>
    <property type="match status" value="1"/>
</dbReference>
<dbReference type="Gene3D" id="3.30.420.40">
    <property type="match status" value="2"/>
</dbReference>
<dbReference type="HAMAP" id="MF_00986">
    <property type="entry name" value="Fuculokinase"/>
    <property type="match status" value="1"/>
</dbReference>
<dbReference type="InterPro" id="IPR043129">
    <property type="entry name" value="ATPase_NBD"/>
</dbReference>
<dbReference type="InterPro" id="IPR000577">
    <property type="entry name" value="Carb_kinase_FGGY"/>
</dbReference>
<dbReference type="InterPro" id="IPR018483">
    <property type="entry name" value="Carb_kinase_FGGY_CS"/>
</dbReference>
<dbReference type="InterPro" id="IPR018485">
    <property type="entry name" value="FGGY_C"/>
</dbReference>
<dbReference type="InterPro" id="IPR050406">
    <property type="entry name" value="FGGY_Carb_Kinase"/>
</dbReference>
<dbReference type="InterPro" id="IPR018484">
    <property type="entry name" value="FGGY_N"/>
</dbReference>
<dbReference type="InterPro" id="IPR013450">
    <property type="entry name" value="Fuculokinase"/>
</dbReference>
<dbReference type="NCBIfam" id="TIGR02628">
    <property type="entry name" value="fuculo_kin_coli"/>
    <property type="match status" value="1"/>
</dbReference>
<dbReference type="PANTHER" id="PTHR43095">
    <property type="entry name" value="SUGAR KINASE"/>
    <property type="match status" value="1"/>
</dbReference>
<dbReference type="PANTHER" id="PTHR43095:SF5">
    <property type="entry name" value="XYLULOSE KINASE"/>
    <property type="match status" value="1"/>
</dbReference>
<dbReference type="Pfam" id="PF02782">
    <property type="entry name" value="FGGY_C"/>
    <property type="match status" value="1"/>
</dbReference>
<dbReference type="Pfam" id="PF00370">
    <property type="entry name" value="FGGY_N"/>
    <property type="match status" value="1"/>
</dbReference>
<dbReference type="PIRSF" id="PIRSF000538">
    <property type="entry name" value="GlpK"/>
    <property type="match status" value="1"/>
</dbReference>
<dbReference type="SUPFAM" id="SSF53067">
    <property type="entry name" value="Actin-like ATPase domain"/>
    <property type="match status" value="2"/>
</dbReference>
<dbReference type="PROSITE" id="PS00933">
    <property type="entry name" value="FGGY_KINASES_1"/>
    <property type="match status" value="1"/>
</dbReference>
<dbReference type="PROSITE" id="PS00445">
    <property type="entry name" value="FGGY_KINASES_2"/>
    <property type="match status" value="1"/>
</dbReference>
<comment type="function">
    <text evidence="1">Catalyzes the phosphorylation of L-fuculose.</text>
</comment>
<comment type="catalytic activity">
    <reaction evidence="1">
        <text>L-fuculose + ATP = L-fuculose 1-phosphate + ADP + H(+)</text>
        <dbReference type="Rhea" id="RHEA:12376"/>
        <dbReference type="ChEBI" id="CHEBI:15378"/>
        <dbReference type="ChEBI" id="CHEBI:17617"/>
        <dbReference type="ChEBI" id="CHEBI:30616"/>
        <dbReference type="ChEBI" id="CHEBI:57846"/>
        <dbReference type="ChEBI" id="CHEBI:456216"/>
        <dbReference type="EC" id="2.7.1.51"/>
    </reaction>
</comment>
<comment type="cofactor">
    <cofactor evidence="1">
        <name>a divalent metal cation</name>
        <dbReference type="ChEBI" id="CHEBI:60240"/>
    </cofactor>
</comment>
<comment type="pathway">
    <text evidence="1">Carbohydrate degradation; L-fucose degradation; L-lactaldehyde and glycerone phosphate from L-fucose: step 2/3.</text>
</comment>
<comment type="similarity">
    <text evidence="1">Belongs to the FGGY kinase family.</text>
</comment>
<comment type="sequence caution" evidence="2">
    <conflict type="erroneous initiation">
        <sequence resource="EMBL-CDS" id="AAG57917"/>
    </conflict>
    <text>Extended N-terminus.</text>
</comment>
<reference key="1">
    <citation type="journal article" date="2001" name="Nature">
        <title>Genome sequence of enterohaemorrhagic Escherichia coli O157:H7.</title>
        <authorList>
            <person name="Perna N.T."/>
            <person name="Plunkett G. III"/>
            <person name="Burland V."/>
            <person name="Mau B."/>
            <person name="Glasner J.D."/>
            <person name="Rose D.J."/>
            <person name="Mayhew G.F."/>
            <person name="Evans P.S."/>
            <person name="Gregor J."/>
            <person name="Kirkpatrick H.A."/>
            <person name="Posfai G."/>
            <person name="Hackett J."/>
            <person name="Klink S."/>
            <person name="Boutin A."/>
            <person name="Shao Y."/>
            <person name="Miller L."/>
            <person name="Grotbeck E.J."/>
            <person name="Davis N.W."/>
            <person name="Lim A."/>
            <person name="Dimalanta E.T."/>
            <person name="Potamousis K."/>
            <person name="Apodaca J."/>
            <person name="Anantharaman T.S."/>
            <person name="Lin J."/>
            <person name="Yen G."/>
            <person name="Schwartz D.C."/>
            <person name="Welch R.A."/>
            <person name="Blattner F.R."/>
        </authorList>
    </citation>
    <scope>NUCLEOTIDE SEQUENCE [LARGE SCALE GENOMIC DNA]</scope>
    <source>
        <strain>O157:H7 / EDL933 / ATCC 700927 / EHEC</strain>
    </source>
</reference>
<reference key="2">
    <citation type="journal article" date="2001" name="DNA Res.">
        <title>Complete genome sequence of enterohemorrhagic Escherichia coli O157:H7 and genomic comparison with a laboratory strain K-12.</title>
        <authorList>
            <person name="Hayashi T."/>
            <person name="Makino K."/>
            <person name="Ohnishi M."/>
            <person name="Kurokawa K."/>
            <person name="Ishii K."/>
            <person name="Yokoyama K."/>
            <person name="Han C.-G."/>
            <person name="Ohtsubo E."/>
            <person name="Nakayama K."/>
            <person name="Murata T."/>
            <person name="Tanaka M."/>
            <person name="Tobe T."/>
            <person name="Iida T."/>
            <person name="Takami H."/>
            <person name="Honda T."/>
            <person name="Sasakawa C."/>
            <person name="Ogasawara N."/>
            <person name="Yasunaga T."/>
            <person name="Kuhara S."/>
            <person name="Shiba T."/>
            <person name="Hattori M."/>
            <person name="Shinagawa H."/>
        </authorList>
    </citation>
    <scope>NUCLEOTIDE SEQUENCE [LARGE SCALE GENOMIC DNA]</scope>
    <source>
        <strain>O157:H7 / Sakai / RIMD 0509952 / EHEC</strain>
    </source>
</reference>
<name>FUCK_ECO57</name>
<sequence>MKQEVILVLDCGATNVRAIAVNRQGKIVARASTPNASDIAMENNTWHQWSLDAILQRFADCCRQINSELTECHIRGIAVTTFGVDGALVDKQGNLLYPIISWKCPRTAAVMDNIERLISAQRLQAISGVGAFSFNTLYKLVWLKENHPQLLERAHAWLFISSLINHRLTGEFTTDITMAGTSQMLDIQQRDFSPQILQATGIPRRLFPRLVEAGEQIGTLQNSAAAMLGLPVGIPVISAGHDTQFALFGAGAEQNEPVLSSGTWEILMVRSAQVDTSLLSQYAGSTCELDSQAGLYNPGMQWLASGVLEWVRKLFWTAETPWQMLIEEARLIAPGADGVKMQCDLLSCQNAGWQGVTLNTTRGHFYRAALEGLTAQLQRNLQMLEKIGHFKASELLLVGGGSRNTLWNQIKANMLDIPLKVLDDAETTVAGAALFGWYGVGEFNSPEEARAQIHYQFRYFYPQTEPEFIEEV</sequence>
<protein>
    <recommendedName>
        <fullName evidence="1">L-fuculokinase</fullName>
        <ecNumber evidence="1">2.7.1.51</ecNumber>
    </recommendedName>
    <alternativeName>
        <fullName evidence="1">L-fuculose kinase</fullName>
    </alternativeName>
</protein>
<evidence type="ECO:0000255" key="1">
    <source>
        <dbReference type="HAMAP-Rule" id="MF_00986"/>
    </source>
</evidence>
<evidence type="ECO:0000305" key="2"/>
<accession>Q8X6R3</accession>
<gene>
    <name evidence="1" type="primary">fucK</name>
    <name type="ordered locus">Z4120</name>
    <name type="ordered locus">ECs3663</name>
</gene>
<keyword id="KW-0067">ATP-binding</keyword>
<keyword id="KW-0119">Carbohydrate metabolism</keyword>
<keyword id="KW-0294">Fucose metabolism</keyword>
<keyword id="KW-0418">Kinase</keyword>
<keyword id="KW-0547">Nucleotide-binding</keyword>
<keyword id="KW-1185">Reference proteome</keyword>
<keyword id="KW-0808">Transferase</keyword>